<comment type="function">
    <text evidence="7">Required for early events during cytokinesis including localization of cytoskeletal components to the cytokinetic ring.</text>
</comment>
<comment type="catalytic activity">
    <reaction evidence="2">
        <text>L-seryl-[protein] + ATP = O-phospho-L-seryl-[protein] + ADP + H(+)</text>
        <dbReference type="Rhea" id="RHEA:17989"/>
        <dbReference type="Rhea" id="RHEA-COMP:9863"/>
        <dbReference type="Rhea" id="RHEA-COMP:11604"/>
        <dbReference type="ChEBI" id="CHEBI:15378"/>
        <dbReference type="ChEBI" id="CHEBI:29999"/>
        <dbReference type="ChEBI" id="CHEBI:30616"/>
        <dbReference type="ChEBI" id="CHEBI:83421"/>
        <dbReference type="ChEBI" id="CHEBI:456216"/>
        <dbReference type="EC" id="2.7.11.1"/>
    </reaction>
</comment>
<comment type="catalytic activity">
    <reaction evidence="2">
        <text>L-threonyl-[protein] + ATP = O-phospho-L-threonyl-[protein] + ADP + H(+)</text>
        <dbReference type="Rhea" id="RHEA:46608"/>
        <dbReference type="Rhea" id="RHEA-COMP:11060"/>
        <dbReference type="Rhea" id="RHEA-COMP:11605"/>
        <dbReference type="ChEBI" id="CHEBI:15378"/>
        <dbReference type="ChEBI" id="CHEBI:30013"/>
        <dbReference type="ChEBI" id="CHEBI:30616"/>
        <dbReference type="ChEBI" id="CHEBI:61977"/>
        <dbReference type="ChEBI" id="CHEBI:456216"/>
        <dbReference type="EC" id="2.7.11.1"/>
    </reaction>
</comment>
<comment type="cofactor">
    <cofactor evidence="2">
        <name>Mg(2+)</name>
        <dbReference type="ChEBI" id="CHEBI:18420"/>
    </cofactor>
</comment>
<comment type="similarity">
    <text evidence="4">Belongs to the protein kinase superfamily. Ser/Thr protein kinase family. CDC7 subfamily.</text>
</comment>
<comment type="sequence caution" evidence="9">
    <conflict type="erroneous gene model prediction">
        <sequence resource="EMBL-CDS" id="AAF15541"/>
    </conflict>
</comment>
<comment type="sequence caution" evidence="9">
    <conflict type="erroneous gene model prediction">
        <sequence resource="EMBL-CDS" id="CBF77635"/>
    </conflict>
</comment>
<comment type="sequence caution" evidence="9">
    <conflict type="erroneous gene model prediction">
        <sequence resource="EMBL-CDS" id="EAA60302"/>
    </conflict>
</comment>
<keyword id="KW-0067">ATP-binding</keyword>
<keyword id="KW-0131">Cell cycle</keyword>
<keyword id="KW-0132">Cell division</keyword>
<keyword id="KW-0418">Kinase</keyword>
<keyword id="KW-0460">Magnesium</keyword>
<keyword id="KW-0479">Metal-binding</keyword>
<keyword id="KW-0547">Nucleotide-binding</keyword>
<keyword id="KW-1185">Reference proteome</keyword>
<keyword id="KW-0723">Serine/threonine-protein kinase</keyword>
<keyword id="KW-0808">Transferase</keyword>
<name>SEPH_EMENI</name>
<feature type="chain" id="PRO_0000396519" description="Cytokinesis protein sepH">
    <location>
        <begin position="1"/>
        <end position="1346"/>
    </location>
</feature>
<feature type="domain" description="Protein kinase" evidence="4">
    <location>
        <begin position="60"/>
        <end position="310"/>
    </location>
</feature>
<feature type="region of interest" description="Disordered" evidence="6">
    <location>
        <begin position="1"/>
        <end position="50"/>
    </location>
</feature>
<feature type="region of interest" description="Disordered" evidence="6">
    <location>
        <begin position="342"/>
        <end position="380"/>
    </location>
</feature>
<feature type="region of interest" description="Disordered" evidence="6">
    <location>
        <begin position="446"/>
        <end position="497"/>
    </location>
</feature>
<feature type="region of interest" description="Disordered" evidence="6">
    <location>
        <begin position="1211"/>
        <end position="1295"/>
    </location>
</feature>
<feature type="compositionally biased region" description="Basic and acidic residues" evidence="6">
    <location>
        <begin position="35"/>
        <end position="50"/>
    </location>
</feature>
<feature type="compositionally biased region" description="Polar residues" evidence="6">
    <location>
        <begin position="477"/>
        <end position="489"/>
    </location>
</feature>
<feature type="compositionally biased region" description="Polar residues" evidence="6">
    <location>
        <begin position="1220"/>
        <end position="1249"/>
    </location>
</feature>
<feature type="active site" description="Proton acceptor" evidence="1 4 5">
    <location>
        <position position="182"/>
    </location>
</feature>
<feature type="binding site" evidence="1 4">
    <location>
        <begin position="66"/>
        <end position="74"/>
    </location>
    <ligand>
        <name>ATP</name>
        <dbReference type="ChEBI" id="CHEBI:30616"/>
    </ligand>
</feature>
<feature type="binding site" evidence="1 4">
    <location>
        <position position="89"/>
    </location>
    <ligand>
        <name>ATP</name>
        <dbReference type="ChEBI" id="CHEBI:30616"/>
    </ligand>
</feature>
<evidence type="ECO:0000250" key="1">
    <source>
        <dbReference type="UniProtKB" id="P28523"/>
    </source>
</evidence>
<evidence type="ECO:0000250" key="2">
    <source>
        <dbReference type="UniProtKB" id="P41892"/>
    </source>
</evidence>
<evidence type="ECO:0000250" key="3">
    <source>
        <dbReference type="UniProtKB" id="P78621"/>
    </source>
</evidence>
<evidence type="ECO:0000255" key="4">
    <source>
        <dbReference type="PROSITE-ProRule" id="PRU00159"/>
    </source>
</evidence>
<evidence type="ECO:0000255" key="5">
    <source>
        <dbReference type="PROSITE-ProRule" id="PRU10027"/>
    </source>
</evidence>
<evidence type="ECO:0000256" key="6">
    <source>
        <dbReference type="SAM" id="MobiDB-lite"/>
    </source>
</evidence>
<evidence type="ECO:0000269" key="7">
    <source>
    </source>
</evidence>
<evidence type="ECO:0000303" key="8">
    <source>
    </source>
</evidence>
<evidence type="ECO:0000305" key="9"/>
<evidence type="ECO:0000312" key="10">
    <source>
        <dbReference type="EMBL" id="AAF15541.1"/>
    </source>
</evidence>
<evidence type="ECO:0000312" key="11">
    <source>
        <dbReference type="EMBL" id="CBF77635.1"/>
    </source>
</evidence>
<evidence type="ECO:0000312" key="12">
    <source>
        <dbReference type="EMBL" id="EAA60302.1"/>
    </source>
</evidence>
<sequence>MVSRSNEGPEAPHPASRTPGAPAKGRLTRLGSSPSKRDDKAKDDRMGKTSAKDVAELKDYQLGDCLGRGAFGSVYRALNWNTGETVAVKQIKLADLPKSELRVIMLEIDLLKNLDHPNIVKYQGFVKSAETLNIILEYCENGSLHSIAKNFGRFPETLVGVYMSQVLHGLLYLHDQGVIHRDIKGANILTTKEGLVKLADFGVASRTTGLSESSVVGTPYWMAPEVIELSGATTASDIWSLGCTVIELLEGKPPYYNLQPMPALFRIVNDDHPPLPQGASPAVKDFLMQCFQKDPNLRVSARKLLKHPWIVNARRSDSVVPKKSTEYEEAVKSVQEWNEALRSPESNALRRGTRNENQNPPSLRLDTRHTPTKVTLPSPVSRIVADKFSSPSSGEEDNWDDDFATAISPSALQLPHLRPHDNFGGMLSSEKLKAFASLDGTVLKSDESFEESDDPFKGSLLAGEHDPLKTIRPPPSQQANSGTSQSQNGPYGAHMRRGPPLNTAITPVYGGQMLQNSSSPIRQQRPPLFYKENSVEDYSDLISANEDVLDRKISAFQESDEHKDLADTGRSREVIRYQSSYEQEDTPRIGRQISVKRYRGTVEIQQFAENEHDEDFSDILGVDGVTLDKAESDDGSNKSTLMLNTKLSNNSWLGDLDDEDDPFALLEEGLDETDLEANIARDKHARLRSQVEGLVGSLKTSQDEEVLGDISEQLLAVFCDFPETKNIIISAHGMLPILEILDLCRRRDITLCLLKIVNAIIYDDYEIQENLCFVGGIPIINEFAAKKYPREIRLEAAAFVQQMYQTSTLTLQMFVSAGGLNVLVEFLEDDYEDERDLVLVGVNGIWSVFELQGSTPKNDFCRILSRSSVLDPLSLVLSRVLDEEGELAEVVEGRIANIFFIFSQAENHVKEMVSERTVLHRVLKELKRMTPAHQITMLKFIKNLSMLSTTLDSLQNSNAIDVLTDLLRSTIKRPHFREVSNQILNTIYNMCRLNKSRQEDAALNGIVPLLQKIVKTERPLKEFALPILCDMAHSGKVGRRELWRNKGLAFYISLLSDPYWQVTALDAIFIWLQEETAKVEEHLLENRYDQPSFTDAIVRCLTLSKANAFENILEPLQKLLRLSPPIASTLARPDLFSRLGQKLHHSKAAVRLNLLRIISSICDSSEQQGGLLASYGLLDSIRELEHDPAILVRDMAGKLIQSSERNDSYGLCKLKPNVRRGSTSATSPGLLANQSAPVTPQLSRQNQSKGYYDSRETQRRPRSAISGSALALRPGSRDGPTPGIVGGANGSAGASRNRIARGVSNRLSHIELLPNDDDRIPSSITRRSSVLPRRRRLTQFEAERGS</sequence>
<accession>Q5B4Z3</accession>
<accession>C8V8V8</accession>
<accession>Q9UVC9</accession>
<organism>
    <name type="scientific">Emericella nidulans (strain FGSC A4 / ATCC 38163 / CBS 112.46 / NRRL 194 / M139)</name>
    <name type="common">Aspergillus nidulans</name>
    <dbReference type="NCBI Taxonomy" id="227321"/>
    <lineage>
        <taxon>Eukaryota</taxon>
        <taxon>Fungi</taxon>
        <taxon>Dikarya</taxon>
        <taxon>Ascomycota</taxon>
        <taxon>Pezizomycotina</taxon>
        <taxon>Eurotiomycetes</taxon>
        <taxon>Eurotiomycetidae</taxon>
        <taxon>Eurotiales</taxon>
        <taxon>Aspergillaceae</taxon>
        <taxon>Aspergillus</taxon>
        <taxon>Aspergillus subgen. Nidulantes</taxon>
    </lineage>
</organism>
<gene>
    <name evidence="10" type="primary">sepH</name>
    <name type="ORF">AN4385</name>
</gene>
<dbReference type="EC" id="2.7.11.1"/>
<dbReference type="EMBL" id="AF011756">
    <property type="protein sequence ID" value="AAF15541.1"/>
    <property type="status" value="ALT_SEQ"/>
    <property type="molecule type" value="Genomic_DNA"/>
</dbReference>
<dbReference type="EMBL" id="AACD01000076">
    <property type="protein sequence ID" value="EAA60302.1"/>
    <property type="status" value="ALT_SEQ"/>
    <property type="molecule type" value="Genomic_DNA"/>
</dbReference>
<dbReference type="EMBL" id="BN001303">
    <property type="protein sequence ID" value="CBF77635.1"/>
    <property type="status" value="ALT_SEQ"/>
    <property type="molecule type" value="Genomic_DNA"/>
</dbReference>
<dbReference type="RefSeq" id="XP_661989.1">
    <property type="nucleotide sequence ID" value="XM_656897.1"/>
</dbReference>
<dbReference type="SMR" id="Q5B4Z3"/>
<dbReference type="STRING" id="227321.Q5B4Z3"/>
<dbReference type="KEGG" id="ani:ANIA_04385"/>
<dbReference type="VEuPathDB" id="FungiDB:AN4385"/>
<dbReference type="eggNOG" id="KOG0198">
    <property type="taxonomic scope" value="Eukaryota"/>
</dbReference>
<dbReference type="HOGENOM" id="CLU_001872_1_1_1"/>
<dbReference type="InParanoid" id="Q5B4Z3"/>
<dbReference type="OrthoDB" id="8693905at2759"/>
<dbReference type="Proteomes" id="UP000000560">
    <property type="component" value="Chromosome III"/>
</dbReference>
<dbReference type="GO" id="GO:0005737">
    <property type="term" value="C:cytoplasm"/>
    <property type="evidence" value="ECO:0000318"/>
    <property type="project" value="GO_Central"/>
</dbReference>
<dbReference type="GO" id="GO:0005829">
    <property type="term" value="C:cytosol"/>
    <property type="evidence" value="ECO:0000314"/>
    <property type="project" value="AspGD"/>
</dbReference>
<dbReference type="GO" id="GO:0005524">
    <property type="term" value="F:ATP binding"/>
    <property type="evidence" value="ECO:0007669"/>
    <property type="project" value="UniProtKB-KW"/>
</dbReference>
<dbReference type="GO" id="GO:0046872">
    <property type="term" value="F:metal ion binding"/>
    <property type="evidence" value="ECO:0007669"/>
    <property type="project" value="UniProtKB-KW"/>
</dbReference>
<dbReference type="GO" id="GO:0106310">
    <property type="term" value="F:protein serine kinase activity"/>
    <property type="evidence" value="ECO:0007669"/>
    <property type="project" value="RHEA"/>
</dbReference>
<dbReference type="GO" id="GO:0004674">
    <property type="term" value="F:protein serine/threonine kinase activity"/>
    <property type="evidence" value="ECO:0000318"/>
    <property type="project" value="GO_Central"/>
</dbReference>
<dbReference type="GO" id="GO:0000915">
    <property type="term" value="P:actomyosin contractile ring assembly"/>
    <property type="evidence" value="ECO:0000315"/>
    <property type="project" value="AspGD"/>
</dbReference>
<dbReference type="CDD" id="cd06627">
    <property type="entry name" value="STKc_Cdc7_like"/>
    <property type="match status" value="1"/>
</dbReference>
<dbReference type="FunFam" id="3.30.200.20:FF:000042">
    <property type="entry name" value="Aurora kinase A"/>
    <property type="match status" value="1"/>
</dbReference>
<dbReference type="FunFam" id="1.25.10.10:FF:000176">
    <property type="entry name" value="Cell division control protein"/>
    <property type="match status" value="1"/>
</dbReference>
<dbReference type="FunFam" id="1.25.10.10:FF:000212">
    <property type="entry name" value="Cell division control protein"/>
    <property type="match status" value="1"/>
</dbReference>
<dbReference type="FunFam" id="1.10.510.10:FF:000246">
    <property type="entry name" value="Putative Serine-threonine kinase SepH"/>
    <property type="match status" value="1"/>
</dbReference>
<dbReference type="Gene3D" id="1.25.10.10">
    <property type="entry name" value="Leucine-rich Repeat Variant"/>
    <property type="match status" value="3"/>
</dbReference>
<dbReference type="Gene3D" id="1.10.510.10">
    <property type="entry name" value="Transferase(Phosphotransferase) domain 1"/>
    <property type="match status" value="1"/>
</dbReference>
<dbReference type="InterPro" id="IPR011989">
    <property type="entry name" value="ARM-like"/>
</dbReference>
<dbReference type="InterPro" id="IPR016024">
    <property type="entry name" value="ARM-type_fold"/>
</dbReference>
<dbReference type="InterPro" id="IPR011009">
    <property type="entry name" value="Kinase-like_dom_sf"/>
</dbReference>
<dbReference type="InterPro" id="IPR000719">
    <property type="entry name" value="Prot_kinase_dom"/>
</dbReference>
<dbReference type="InterPro" id="IPR017441">
    <property type="entry name" value="Protein_kinase_ATP_BS"/>
</dbReference>
<dbReference type="InterPro" id="IPR008271">
    <property type="entry name" value="Ser/Thr_kinase_AS"/>
</dbReference>
<dbReference type="InterPro" id="IPR053235">
    <property type="entry name" value="Ser_Thr_kinase"/>
</dbReference>
<dbReference type="PANTHER" id="PTHR24361">
    <property type="entry name" value="MITOGEN-ACTIVATED KINASE KINASE KINASE"/>
    <property type="match status" value="1"/>
</dbReference>
<dbReference type="PANTHER" id="PTHR24361:SF433">
    <property type="entry name" value="PROTEIN KINASE DOMAIN-CONTAINING PROTEIN"/>
    <property type="match status" value="1"/>
</dbReference>
<dbReference type="Pfam" id="PF00069">
    <property type="entry name" value="Pkinase"/>
    <property type="match status" value="1"/>
</dbReference>
<dbReference type="SMART" id="SM00220">
    <property type="entry name" value="S_TKc"/>
    <property type="match status" value="1"/>
</dbReference>
<dbReference type="SUPFAM" id="SSF48371">
    <property type="entry name" value="ARM repeat"/>
    <property type="match status" value="2"/>
</dbReference>
<dbReference type="SUPFAM" id="SSF56112">
    <property type="entry name" value="Protein kinase-like (PK-like)"/>
    <property type="match status" value="1"/>
</dbReference>
<dbReference type="PROSITE" id="PS00107">
    <property type="entry name" value="PROTEIN_KINASE_ATP"/>
    <property type="match status" value="1"/>
</dbReference>
<dbReference type="PROSITE" id="PS50011">
    <property type="entry name" value="PROTEIN_KINASE_DOM"/>
    <property type="match status" value="1"/>
</dbReference>
<dbReference type="PROSITE" id="PS00108">
    <property type="entry name" value="PROTEIN_KINASE_ST"/>
    <property type="match status" value="1"/>
</dbReference>
<reference evidence="9 10" key="1">
    <citation type="journal article" date="2001" name="Mol. Microbiol.">
        <title>SEPH, a Cdc7p orthologue from Aspergillus nidulans, functions upstream of actin ring formation during cytokinesis.</title>
        <authorList>
            <person name="Bruno K.S."/>
            <person name="Morrell J.L."/>
            <person name="Hamer J.E."/>
            <person name="Staiger C.J."/>
        </authorList>
    </citation>
    <scope>NUCLEOTIDE SEQUENCE [GENOMIC DNA]</scope>
    <scope>FUNCTION</scope>
</reference>
<reference evidence="12" key="2">
    <citation type="journal article" date="2005" name="Nature">
        <title>Sequencing of Aspergillus nidulans and comparative analysis with A. fumigatus and A. oryzae.</title>
        <authorList>
            <person name="Galagan J.E."/>
            <person name="Calvo S.E."/>
            <person name="Cuomo C."/>
            <person name="Ma L.-J."/>
            <person name="Wortman J.R."/>
            <person name="Batzoglou S."/>
            <person name="Lee S.-I."/>
            <person name="Bastuerkmen M."/>
            <person name="Spevak C.C."/>
            <person name="Clutterbuck J."/>
            <person name="Kapitonov V."/>
            <person name="Jurka J."/>
            <person name="Scazzocchio C."/>
            <person name="Farman M.L."/>
            <person name="Butler J."/>
            <person name="Purcell S."/>
            <person name="Harris S."/>
            <person name="Braus G.H."/>
            <person name="Draht O."/>
            <person name="Busch S."/>
            <person name="D'Enfert C."/>
            <person name="Bouchier C."/>
            <person name="Goldman G.H."/>
            <person name="Bell-Pedersen D."/>
            <person name="Griffiths-Jones S."/>
            <person name="Doonan J.H."/>
            <person name="Yu J."/>
            <person name="Vienken K."/>
            <person name="Pain A."/>
            <person name="Freitag M."/>
            <person name="Selker E.U."/>
            <person name="Archer D.B."/>
            <person name="Penalva M.A."/>
            <person name="Oakley B.R."/>
            <person name="Momany M."/>
            <person name="Tanaka T."/>
            <person name="Kumagai T."/>
            <person name="Asai K."/>
            <person name="Machida M."/>
            <person name="Nierman W.C."/>
            <person name="Denning D.W."/>
            <person name="Caddick M.X."/>
            <person name="Hynes M."/>
            <person name="Paoletti M."/>
            <person name="Fischer R."/>
            <person name="Miller B.L."/>
            <person name="Dyer P.S."/>
            <person name="Sachs M.S."/>
            <person name="Osmani S.A."/>
            <person name="Birren B.W."/>
        </authorList>
    </citation>
    <scope>NUCLEOTIDE SEQUENCE [LARGE SCALE GENOMIC DNA]</scope>
    <source>
        <strain>FGSC A4 / ATCC 38163 / CBS 112.46 / NRRL 194 / M139</strain>
    </source>
</reference>
<reference evidence="9 11" key="3">
    <citation type="journal article" date="2009" name="Fungal Genet. Biol.">
        <title>The 2008 update of the Aspergillus nidulans genome annotation: a community effort.</title>
        <authorList>
            <person name="Wortman J.R."/>
            <person name="Gilsenan J.M."/>
            <person name="Joardar V."/>
            <person name="Deegan J."/>
            <person name="Clutterbuck J."/>
            <person name="Andersen M.R."/>
            <person name="Archer D."/>
            <person name="Bencina M."/>
            <person name="Braus G."/>
            <person name="Coutinho P."/>
            <person name="von Dohren H."/>
            <person name="Doonan J."/>
            <person name="Driessen A.J."/>
            <person name="Durek P."/>
            <person name="Espeso E."/>
            <person name="Fekete E."/>
            <person name="Flipphi M."/>
            <person name="Estrada C.G."/>
            <person name="Geysens S."/>
            <person name="Goldman G."/>
            <person name="de Groot P.W."/>
            <person name="Hansen K."/>
            <person name="Harris S.D."/>
            <person name="Heinekamp T."/>
            <person name="Helmstaedt K."/>
            <person name="Henrissat B."/>
            <person name="Hofmann G."/>
            <person name="Homan T."/>
            <person name="Horio T."/>
            <person name="Horiuchi H."/>
            <person name="James S."/>
            <person name="Jones M."/>
            <person name="Karaffa L."/>
            <person name="Karanyi Z."/>
            <person name="Kato M."/>
            <person name="Keller N."/>
            <person name="Kelly D.E."/>
            <person name="Kiel J.A."/>
            <person name="Kim J.M."/>
            <person name="van der Klei I.J."/>
            <person name="Klis F.M."/>
            <person name="Kovalchuk A."/>
            <person name="Krasevec N."/>
            <person name="Kubicek C.P."/>
            <person name="Liu B."/>
            <person name="Maccabe A."/>
            <person name="Meyer V."/>
            <person name="Mirabito P."/>
            <person name="Miskei M."/>
            <person name="Mos M."/>
            <person name="Mullins J."/>
            <person name="Nelson D.R."/>
            <person name="Nielsen J."/>
            <person name="Oakley B.R."/>
            <person name="Osmani S.A."/>
            <person name="Pakula T."/>
            <person name="Paszewski A."/>
            <person name="Paulsen I."/>
            <person name="Pilsyk S."/>
            <person name="Pocsi I."/>
            <person name="Punt P.J."/>
            <person name="Ram A.F."/>
            <person name="Ren Q."/>
            <person name="Robellet X."/>
            <person name="Robson G."/>
            <person name="Seiboth B."/>
            <person name="van Solingen P."/>
            <person name="Specht T."/>
            <person name="Sun J."/>
            <person name="Taheri-Talesh N."/>
            <person name="Takeshita N."/>
            <person name="Ussery D."/>
            <person name="vanKuyk P.A."/>
            <person name="Visser H."/>
            <person name="van de Vondervoort P.J."/>
            <person name="de Vries R.P."/>
            <person name="Walton J."/>
            <person name="Xiang X."/>
            <person name="Xiong Y."/>
            <person name="Zeng A.P."/>
            <person name="Brandt B.W."/>
            <person name="Cornell M.J."/>
            <person name="van den Hondel C.A."/>
            <person name="Visser J."/>
            <person name="Oliver S.G."/>
            <person name="Turner G."/>
        </authorList>
    </citation>
    <scope>GENOME REANNOTATION</scope>
    <source>
        <strain>FGSC A4 / ATCC 38163 / CBS 112.46 / NRRL 194 / M139</strain>
    </source>
</reference>
<proteinExistence type="inferred from homology"/>
<protein>
    <recommendedName>
        <fullName evidence="3">Cytokinesis protein sepH</fullName>
        <ecNumber>2.7.11.1</ecNumber>
    </recommendedName>
    <alternativeName>
        <fullName evidence="8">Serine/threonine-protein kinase sepH</fullName>
    </alternativeName>
</protein>